<proteinExistence type="evidence at transcript level"/>
<gene>
    <name evidence="4" type="primary">aurkb</name>
    <name type="synonym">airk2</name>
</gene>
<keyword id="KW-0067">ATP-binding</keyword>
<keyword id="KW-0131">Cell cycle</keyword>
<keyword id="KW-0132">Cell division</keyword>
<keyword id="KW-0137">Centromere</keyword>
<keyword id="KW-0158">Chromosome</keyword>
<keyword id="KW-0159">Chromosome partition</keyword>
<keyword id="KW-0963">Cytoplasm</keyword>
<keyword id="KW-0206">Cytoskeleton</keyword>
<keyword id="KW-0418">Kinase</keyword>
<keyword id="KW-0498">Mitosis</keyword>
<keyword id="KW-0547">Nucleotide-binding</keyword>
<keyword id="KW-0539">Nucleus</keyword>
<keyword id="KW-0597">Phosphoprotein</keyword>
<keyword id="KW-1185">Reference proteome</keyword>
<keyword id="KW-0723">Serine/threonine-protein kinase</keyword>
<keyword id="KW-0808">Transferase</keyword>
<dbReference type="EC" id="2.7.11.1"/>
<dbReference type="EMBL" id="BC135173">
    <property type="protein sequence ID" value="AAI35174.1"/>
    <property type="molecule type" value="mRNA"/>
</dbReference>
<dbReference type="RefSeq" id="NP_001016859.2">
    <property type="nucleotide sequence ID" value="NM_001016859.3"/>
</dbReference>
<dbReference type="RefSeq" id="XP_012809282.1">
    <property type="nucleotide sequence ID" value="XM_012953828.3"/>
</dbReference>
<dbReference type="SMR" id="A4IGM9"/>
<dbReference type="FunCoup" id="A4IGM9">
    <property type="interactions" value="1333"/>
</dbReference>
<dbReference type="STRING" id="8364.ENSXETP00000044841"/>
<dbReference type="PaxDb" id="8364-ENSXETP00000019956"/>
<dbReference type="DNASU" id="549613"/>
<dbReference type="GeneID" id="549613"/>
<dbReference type="KEGG" id="xtr:549613"/>
<dbReference type="AGR" id="Xenbase:XB-GENE-1019626"/>
<dbReference type="CTD" id="9212"/>
<dbReference type="Xenbase" id="XB-GENE-1019626">
    <property type="gene designation" value="aurkb"/>
</dbReference>
<dbReference type="eggNOG" id="KOG0580">
    <property type="taxonomic scope" value="Eukaryota"/>
</dbReference>
<dbReference type="HOGENOM" id="CLU_000288_63_0_1"/>
<dbReference type="InParanoid" id="A4IGM9"/>
<dbReference type="OrthoDB" id="377346at2759"/>
<dbReference type="Reactome" id="R-XTR-141444">
    <property type="pathway name" value="Amplification of signal from unattached kinetochores via a MAD2 inhibitory signal"/>
</dbReference>
<dbReference type="Reactome" id="R-XTR-174178">
    <property type="pathway name" value="APC/C:Cdh1 mediated degradation of Cdc20 and other APC/C:Cdh1 targeted proteins in late mitosis/early G1"/>
</dbReference>
<dbReference type="Reactome" id="R-XTR-2467813">
    <property type="pathway name" value="Separation of Sister Chromatids"/>
</dbReference>
<dbReference type="Reactome" id="R-XTR-2500257">
    <property type="pathway name" value="Resolution of Sister Chromatid Cohesion"/>
</dbReference>
<dbReference type="Reactome" id="R-XTR-4615885">
    <property type="pathway name" value="SUMOylation of DNA replication proteins"/>
</dbReference>
<dbReference type="Reactome" id="R-XTR-5663220">
    <property type="pathway name" value="RHO GTPases Activate Formins"/>
</dbReference>
<dbReference type="Reactome" id="R-XTR-6804756">
    <property type="pathway name" value="Regulation of TP53 Activity through Phosphorylation"/>
</dbReference>
<dbReference type="Reactome" id="R-XTR-68877">
    <property type="pathway name" value="Mitotic Prometaphase"/>
</dbReference>
<dbReference type="Reactome" id="R-XTR-9648025">
    <property type="pathway name" value="EML4 and NUDC in mitotic spindle formation"/>
</dbReference>
<dbReference type="Proteomes" id="UP000008143">
    <property type="component" value="Chromosome 3"/>
</dbReference>
<dbReference type="Bgee" id="ENSXETG00000009097">
    <property type="expression patterns" value="Expressed in 2-cell stage embryo and 11 other cell types or tissues"/>
</dbReference>
<dbReference type="GO" id="GO:0000785">
    <property type="term" value="C:chromatin"/>
    <property type="evidence" value="ECO:0000250"/>
    <property type="project" value="UniProtKB"/>
</dbReference>
<dbReference type="GO" id="GO:0005694">
    <property type="term" value="C:chromosome"/>
    <property type="evidence" value="ECO:0000250"/>
    <property type="project" value="UniProtKB"/>
</dbReference>
<dbReference type="GO" id="GO:0032133">
    <property type="term" value="C:chromosome passenger complex"/>
    <property type="evidence" value="ECO:0000250"/>
    <property type="project" value="UniProtKB"/>
</dbReference>
<dbReference type="GO" id="GO:0000775">
    <property type="term" value="C:chromosome, centromeric region"/>
    <property type="evidence" value="ECO:0000250"/>
    <property type="project" value="UniProtKB"/>
</dbReference>
<dbReference type="GO" id="GO:0005737">
    <property type="term" value="C:cytoplasm"/>
    <property type="evidence" value="ECO:0007669"/>
    <property type="project" value="UniProtKB-KW"/>
</dbReference>
<dbReference type="GO" id="GO:0000776">
    <property type="term" value="C:kinetochore"/>
    <property type="evidence" value="ECO:0000250"/>
    <property type="project" value="UniProtKB"/>
</dbReference>
<dbReference type="GO" id="GO:0030496">
    <property type="term" value="C:midbody"/>
    <property type="evidence" value="ECO:0000250"/>
    <property type="project" value="UniProtKB"/>
</dbReference>
<dbReference type="GO" id="GO:0005634">
    <property type="term" value="C:nucleus"/>
    <property type="evidence" value="ECO:0000250"/>
    <property type="project" value="UniProtKB"/>
</dbReference>
<dbReference type="GO" id="GO:0005819">
    <property type="term" value="C:spindle"/>
    <property type="evidence" value="ECO:0007669"/>
    <property type="project" value="UniProtKB-SubCell"/>
</dbReference>
<dbReference type="GO" id="GO:0005524">
    <property type="term" value="F:ATP binding"/>
    <property type="evidence" value="ECO:0007669"/>
    <property type="project" value="UniProtKB-KW"/>
</dbReference>
<dbReference type="GO" id="GO:0035175">
    <property type="term" value="F:histone H3S10 kinase activity"/>
    <property type="evidence" value="ECO:0000250"/>
    <property type="project" value="UniProtKB"/>
</dbReference>
<dbReference type="GO" id="GO:0106310">
    <property type="term" value="F:protein serine kinase activity"/>
    <property type="evidence" value="ECO:0007669"/>
    <property type="project" value="RHEA"/>
</dbReference>
<dbReference type="GO" id="GO:0004674">
    <property type="term" value="F:protein serine/threonine kinase activity"/>
    <property type="evidence" value="ECO:0000250"/>
    <property type="project" value="UniProtKB"/>
</dbReference>
<dbReference type="GO" id="GO:0034644">
    <property type="term" value="P:cellular response to UV"/>
    <property type="evidence" value="ECO:0000250"/>
    <property type="project" value="UniProtKB"/>
</dbReference>
<dbReference type="GO" id="GO:0036089">
    <property type="term" value="P:cleavage furrow formation"/>
    <property type="evidence" value="ECO:0000250"/>
    <property type="project" value="UniProtKB"/>
</dbReference>
<dbReference type="GO" id="GO:0061952">
    <property type="term" value="P:midbody abscission"/>
    <property type="evidence" value="ECO:0000250"/>
    <property type="project" value="UniProtKB"/>
</dbReference>
<dbReference type="GO" id="GO:0044878">
    <property type="term" value="P:mitotic cytokinesis checkpoint signaling"/>
    <property type="evidence" value="ECO:0000250"/>
    <property type="project" value="UniProtKB"/>
</dbReference>
<dbReference type="GO" id="GO:1990758">
    <property type="term" value="P:mitotic sister chromatid biorientation"/>
    <property type="evidence" value="ECO:0000250"/>
    <property type="project" value="UniProtKB"/>
</dbReference>
<dbReference type="GO" id="GO:0051256">
    <property type="term" value="P:mitotic spindle midzone assembly"/>
    <property type="evidence" value="ECO:0000250"/>
    <property type="project" value="UniProtKB"/>
</dbReference>
<dbReference type="GO" id="GO:0002903">
    <property type="term" value="P:negative regulation of B cell apoptotic process"/>
    <property type="evidence" value="ECO:0000250"/>
    <property type="project" value="UniProtKB"/>
</dbReference>
<dbReference type="GO" id="GO:0032466">
    <property type="term" value="P:negative regulation of cytokinesis"/>
    <property type="evidence" value="ECO:0000250"/>
    <property type="project" value="UniProtKB"/>
</dbReference>
<dbReference type="GO" id="GO:0000122">
    <property type="term" value="P:negative regulation of transcription by RNA polymerase II"/>
    <property type="evidence" value="ECO:0000250"/>
    <property type="project" value="UniProtKB"/>
</dbReference>
<dbReference type="GO" id="GO:0032467">
    <property type="term" value="P:positive regulation of cytokinesis"/>
    <property type="evidence" value="ECO:0000250"/>
    <property type="project" value="UniProtKB"/>
</dbReference>
<dbReference type="GO" id="GO:0062033">
    <property type="term" value="P:positive regulation of mitotic sister chromatid segregation"/>
    <property type="evidence" value="ECO:0000250"/>
    <property type="project" value="UniProtKB"/>
</dbReference>
<dbReference type="GO" id="GO:0043687">
    <property type="term" value="P:post-translational protein modification"/>
    <property type="evidence" value="ECO:0000250"/>
    <property type="project" value="UniProtKB"/>
</dbReference>
<dbReference type="GO" id="GO:0034501">
    <property type="term" value="P:protein localization to kinetochore"/>
    <property type="evidence" value="ECO:0000250"/>
    <property type="project" value="UniProtKB"/>
</dbReference>
<dbReference type="GO" id="GO:0140273">
    <property type="term" value="P:repair of mitotic kinetochore microtubule attachment defect"/>
    <property type="evidence" value="ECO:0000250"/>
    <property type="project" value="UniProtKB"/>
</dbReference>
<dbReference type="GO" id="GO:0051225">
    <property type="term" value="P:spindle assembly"/>
    <property type="evidence" value="ECO:0000250"/>
    <property type="project" value="UniProtKB"/>
</dbReference>
<dbReference type="CDD" id="cd14117">
    <property type="entry name" value="STKc_Aurora-B_like"/>
    <property type="match status" value="1"/>
</dbReference>
<dbReference type="FunFam" id="3.30.200.20:FF:000042">
    <property type="entry name" value="Aurora kinase A"/>
    <property type="match status" value="1"/>
</dbReference>
<dbReference type="FunFam" id="1.10.510.10:FF:000235">
    <property type="entry name" value="Serine/threonine-protein kinase ark1"/>
    <property type="match status" value="1"/>
</dbReference>
<dbReference type="Gene3D" id="3.30.200.20">
    <property type="entry name" value="Phosphorylase Kinase, domain 1"/>
    <property type="match status" value="1"/>
</dbReference>
<dbReference type="Gene3D" id="1.10.510.10">
    <property type="entry name" value="Transferase(Phosphotransferase) domain 1"/>
    <property type="match status" value="1"/>
</dbReference>
<dbReference type="InterPro" id="IPR030616">
    <property type="entry name" value="Aur-like"/>
</dbReference>
<dbReference type="InterPro" id="IPR011009">
    <property type="entry name" value="Kinase-like_dom_sf"/>
</dbReference>
<dbReference type="InterPro" id="IPR000719">
    <property type="entry name" value="Prot_kinase_dom"/>
</dbReference>
<dbReference type="InterPro" id="IPR017441">
    <property type="entry name" value="Protein_kinase_ATP_BS"/>
</dbReference>
<dbReference type="InterPro" id="IPR008271">
    <property type="entry name" value="Ser/Thr_kinase_AS"/>
</dbReference>
<dbReference type="PANTHER" id="PTHR24350">
    <property type="entry name" value="SERINE/THREONINE-PROTEIN KINASE IAL-RELATED"/>
    <property type="match status" value="1"/>
</dbReference>
<dbReference type="Pfam" id="PF00069">
    <property type="entry name" value="Pkinase"/>
    <property type="match status" value="1"/>
</dbReference>
<dbReference type="SMART" id="SM00220">
    <property type="entry name" value="S_TKc"/>
    <property type="match status" value="1"/>
</dbReference>
<dbReference type="SUPFAM" id="SSF56112">
    <property type="entry name" value="Protein kinase-like (PK-like)"/>
    <property type="match status" value="1"/>
</dbReference>
<dbReference type="PROSITE" id="PS00107">
    <property type="entry name" value="PROTEIN_KINASE_ATP"/>
    <property type="match status" value="1"/>
</dbReference>
<dbReference type="PROSITE" id="PS50011">
    <property type="entry name" value="PROTEIN_KINASE_DOM"/>
    <property type="match status" value="1"/>
</dbReference>
<dbReference type="PROSITE" id="PS00108">
    <property type="entry name" value="PROTEIN_KINASE_ST"/>
    <property type="match status" value="1"/>
</dbReference>
<name>AURKB_XENTR</name>
<reference evidence="4" key="1">
    <citation type="submission" date="2007-03" db="EMBL/GenBank/DDBJ databases">
        <authorList>
            <consortium name="NIH - Xenopus Gene Collection (XGC) project"/>
        </authorList>
    </citation>
    <scope>NUCLEOTIDE SEQUENCE [LARGE SCALE MRNA]</scope>
    <source>
        <tissue evidence="4">Tadpole</tissue>
    </source>
</reference>
<comment type="function">
    <text evidence="1">Serine/threonine-protein kinase component of the chromosomal passenger complex (CPC), a complex that acts as a key regulator of mitosis. The CPC complex has essential functions at the centromere in ensuring correct chromosome alignment and segregation and is required for chromatin-induced microtubule stabilization and spindle assembly. Involved in the bipolar attachment of spindle microtubules to kinetochores and is a key regulator for the onset of cytokinesis during mitosis. Required for central/midzone spindle assembly and cleavage furrow formation. Key component of the cytokinesis checkpoint, a process required to delay abscission to prevent both premature resolution of intercellular chromosome bridges and accumulation of DNA damage. Phosphorylates 'Ser-10' of histone H3 during mitosis.</text>
</comment>
<comment type="catalytic activity">
    <reaction evidence="1">
        <text>L-seryl-[protein] + ATP = O-phospho-L-seryl-[protein] + ADP + H(+)</text>
        <dbReference type="Rhea" id="RHEA:17989"/>
        <dbReference type="Rhea" id="RHEA-COMP:9863"/>
        <dbReference type="Rhea" id="RHEA-COMP:11604"/>
        <dbReference type="ChEBI" id="CHEBI:15378"/>
        <dbReference type="ChEBI" id="CHEBI:29999"/>
        <dbReference type="ChEBI" id="CHEBI:30616"/>
        <dbReference type="ChEBI" id="CHEBI:83421"/>
        <dbReference type="ChEBI" id="CHEBI:456216"/>
        <dbReference type="EC" id="2.7.11.1"/>
    </reaction>
</comment>
<comment type="catalytic activity">
    <reaction evidence="1">
        <text>L-threonyl-[protein] + ATP = O-phospho-L-threonyl-[protein] + ADP + H(+)</text>
        <dbReference type="Rhea" id="RHEA:46608"/>
        <dbReference type="Rhea" id="RHEA-COMP:11060"/>
        <dbReference type="Rhea" id="RHEA-COMP:11605"/>
        <dbReference type="ChEBI" id="CHEBI:15378"/>
        <dbReference type="ChEBI" id="CHEBI:30013"/>
        <dbReference type="ChEBI" id="CHEBI:30616"/>
        <dbReference type="ChEBI" id="CHEBI:61977"/>
        <dbReference type="ChEBI" id="CHEBI:456216"/>
        <dbReference type="EC" id="2.7.11.1"/>
    </reaction>
</comment>
<comment type="activity regulation">
    <text evidence="1">Kinase activity is stimulated by cell-cycle specific phosphorylation.</text>
</comment>
<comment type="subunit">
    <text evidence="1">Component of the chromosomal passenger complex (CPC).</text>
</comment>
<comment type="subcellular location">
    <subcellularLocation>
        <location evidence="1">Nucleus</location>
    </subcellularLocation>
    <subcellularLocation>
        <location evidence="1">Chromosome</location>
    </subcellularLocation>
    <subcellularLocation>
        <location evidence="1">Chromosome</location>
        <location evidence="1">Centromere</location>
    </subcellularLocation>
    <subcellularLocation>
        <location evidence="1">Cytoplasm</location>
        <location evidence="1">Cytoskeleton</location>
        <location evidence="1">Spindle</location>
    </subcellularLocation>
    <subcellularLocation>
        <location evidence="1">Midbody</location>
    </subcellularLocation>
    <text evidence="1">Localizes on chromosome arms and inner centromeres from prophase through metaphase and then transferring to the spindle midzone and midbody from anaphase through cytokinesis. Localization (and probably targeting of the CPC) to the inner centromere occurs predominantly in regions with overlapping mitosis-specific histone phosphorylations H3pT3 and H2ApT12.</text>
</comment>
<comment type="similarity">
    <text evidence="2">Belongs to the protein kinase superfamily. Ser/Thr protein kinase family. Aurora subfamily.</text>
</comment>
<evidence type="ECO:0000250" key="1">
    <source>
        <dbReference type="UniProtKB" id="Q96GD4"/>
    </source>
</evidence>
<evidence type="ECO:0000255" key="2">
    <source>
        <dbReference type="PROSITE-ProRule" id="PRU00159"/>
    </source>
</evidence>
<evidence type="ECO:0000255" key="3">
    <source>
        <dbReference type="PROSITE-ProRule" id="PRU10027"/>
    </source>
</evidence>
<evidence type="ECO:0000312" key="4">
    <source>
        <dbReference type="EMBL" id="AAI35174.1"/>
    </source>
</evidence>
<feature type="chain" id="PRO_0000385449" description="Aurora kinase B">
    <location>
        <begin position="1"/>
        <end position="360"/>
    </location>
</feature>
<feature type="domain" description="Protein kinase" evidence="2">
    <location>
        <begin position="93"/>
        <end position="343"/>
    </location>
</feature>
<feature type="active site" description="Proton acceptor" evidence="2 3">
    <location>
        <position position="216"/>
    </location>
</feature>
<feature type="binding site" evidence="2">
    <location>
        <begin position="99"/>
        <end position="107"/>
    </location>
    <ligand>
        <name>ATP</name>
        <dbReference type="ChEBI" id="CHEBI:30616"/>
    </ligand>
</feature>
<feature type="binding site" evidence="2">
    <location>
        <position position="122"/>
    </location>
    <ligand>
        <name>ATP</name>
        <dbReference type="ChEBI" id="CHEBI:30616"/>
    </ligand>
</feature>
<protein>
    <recommendedName>
        <fullName>Aurora kinase B</fullName>
        <ecNumber>2.7.11.1</ecNumber>
    </recommendedName>
    <alternativeName>
        <fullName>Aurora/IPL1-related kinase 2</fullName>
        <shortName>AIRK2</shortName>
        <shortName>XAIRK2</shortName>
    </alternativeName>
    <alternativeName>
        <fullName evidence="1">Serine/threonine-protein kinase 12</fullName>
    </alternativeName>
    <alternativeName>
        <fullName>Serine/threonine-protein kinase aurora-B</fullName>
        <shortName>xAurora-B</shortName>
    </alternativeName>
</protein>
<organism>
    <name type="scientific">Xenopus tropicalis</name>
    <name type="common">Western clawed frog</name>
    <name type="synonym">Silurana tropicalis</name>
    <dbReference type="NCBI Taxonomy" id="8364"/>
    <lineage>
        <taxon>Eukaryota</taxon>
        <taxon>Metazoa</taxon>
        <taxon>Chordata</taxon>
        <taxon>Craniata</taxon>
        <taxon>Vertebrata</taxon>
        <taxon>Euteleostomi</taxon>
        <taxon>Amphibia</taxon>
        <taxon>Batrachia</taxon>
        <taxon>Anura</taxon>
        <taxon>Pipoidea</taxon>
        <taxon>Pipidae</taxon>
        <taxon>Xenopodinae</taxon>
        <taxon>Xenopus</taxon>
        <taxon>Silurana</taxon>
    </lineage>
</organism>
<sequence length="360" mass="41390">MSYKENLNPSSYTSKFATPSSATAAQRVLRKEPYVSTFTTPSDNLLAQRAQLARITPSASSSVPGRVAVSMDASSQNTALAELPKRKFTIDDFDIGRPLGKGKFGNVYLARDKQNKFIMALKVLFKSQLEKEGVEHQLRREIEIQSHLRHPNILRMYNYFHDRKRIYLMLEFAPRGELYKELQKHGRFDEQRSATFMEELADALQYCHERKVIHRDIKPENLLMGYKGELKIADFGWSVHAPSLRRRTMCGTLDYLPPEMIEGKTHDEKVDLWCAGVLCFEFLVGMPPFDSPSHTETHRRIVNVDLKFPPFLSDGSKDLISKLLRYHPPQRLPLKGVMEHPWVKANSRRVLPPVFQSSSK</sequence>
<accession>A4IGM9</accession>